<feature type="chain" id="PRO_1000145004" description="Protein translocase subunit SecA">
    <location>
        <begin position="1"/>
        <end position="844"/>
    </location>
</feature>
<feature type="region of interest" description="Disordered" evidence="2">
    <location>
        <begin position="783"/>
        <end position="844"/>
    </location>
</feature>
<feature type="compositionally biased region" description="Basic and acidic residues" evidence="2">
    <location>
        <begin position="783"/>
        <end position="800"/>
    </location>
</feature>
<feature type="compositionally biased region" description="Polar residues" evidence="2">
    <location>
        <begin position="802"/>
        <end position="811"/>
    </location>
</feature>
<feature type="compositionally biased region" description="Basic and acidic residues" evidence="2">
    <location>
        <begin position="816"/>
        <end position="826"/>
    </location>
</feature>
<feature type="binding site" evidence="1">
    <location>
        <position position="87"/>
    </location>
    <ligand>
        <name>ATP</name>
        <dbReference type="ChEBI" id="CHEBI:30616"/>
    </ligand>
</feature>
<feature type="binding site" evidence="1">
    <location>
        <begin position="105"/>
        <end position="109"/>
    </location>
    <ligand>
        <name>ATP</name>
        <dbReference type="ChEBI" id="CHEBI:30616"/>
    </ligand>
</feature>
<feature type="binding site" evidence="1">
    <location>
        <position position="495"/>
    </location>
    <ligand>
        <name>ATP</name>
        <dbReference type="ChEBI" id="CHEBI:30616"/>
    </ligand>
</feature>
<feature type="binding site" evidence="1">
    <location>
        <position position="830"/>
    </location>
    <ligand>
        <name>Zn(2+)</name>
        <dbReference type="ChEBI" id="CHEBI:29105"/>
    </ligand>
</feature>
<feature type="binding site" evidence="1">
    <location>
        <position position="832"/>
    </location>
    <ligand>
        <name>Zn(2+)</name>
        <dbReference type="ChEBI" id="CHEBI:29105"/>
    </ligand>
</feature>
<feature type="binding site" evidence="1">
    <location>
        <position position="841"/>
    </location>
    <ligand>
        <name>Zn(2+)</name>
        <dbReference type="ChEBI" id="CHEBI:29105"/>
    </ligand>
</feature>
<feature type="binding site" evidence="1">
    <location>
        <position position="842"/>
    </location>
    <ligand>
        <name>Zn(2+)</name>
        <dbReference type="ChEBI" id="CHEBI:29105"/>
    </ligand>
</feature>
<organism>
    <name type="scientific">Nitratidesulfovibrio vulgaris (strain DSM 19637 / Miyazaki F)</name>
    <name type="common">Desulfovibrio vulgaris</name>
    <dbReference type="NCBI Taxonomy" id="883"/>
    <lineage>
        <taxon>Bacteria</taxon>
        <taxon>Pseudomonadati</taxon>
        <taxon>Thermodesulfobacteriota</taxon>
        <taxon>Desulfovibrionia</taxon>
        <taxon>Desulfovibrionales</taxon>
        <taxon>Desulfovibrionaceae</taxon>
        <taxon>Nitratidesulfovibrio</taxon>
    </lineage>
</organism>
<comment type="function">
    <text evidence="1">Part of the Sec protein translocase complex. Interacts with the SecYEG preprotein conducting channel. Has a central role in coupling the hydrolysis of ATP to the transfer of proteins into and across the cell membrane, serving as an ATP-driven molecular motor driving the stepwise translocation of polypeptide chains across the membrane.</text>
</comment>
<comment type="catalytic activity">
    <reaction evidence="1">
        <text>ATP + H2O + cellular proteinSide 1 = ADP + phosphate + cellular proteinSide 2.</text>
        <dbReference type="EC" id="7.4.2.8"/>
    </reaction>
</comment>
<comment type="cofactor">
    <cofactor evidence="1">
        <name>Zn(2+)</name>
        <dbReference type="ChEBI" id="CHEBI:29105"/>
    </cofactor>
    <text evidence="1">May bind 1 zinc ion per subunit.</text>
</comment>
<comment type="subunit">
    <text evidence="1">Monomer and homodimer. Part of the essential Sec protein translocation apparatus which comprises SecA, SecYEG and auxiliary proteins SecDF-YajC and YidC.</text>
</comment>
<comment type="subcellular location">
    <subcellularLocation>
        <location evidence="1">Cell inner membrane</location>
        <topology evidence="1">Peripheral membrane protein</topology>
        <orientation evidence="1">Cytoplasmic side</orientation>
    </subcellularLocation>
    <subcellularLocation>
        <location evidence="1">Cytoplasm</location>
    </subcellularLocation>
    <text evidence="1">Distribution is 50-50.</text>
</comment>
<comment type="similarity">
    <text evidence="1">Belongs to the SecA family.</text>
</comment>
<proteinExistence type="inferred from homology"/>
<evidence type="ECO:0000255" key="1">
    <source>
        <dbReference type="HAMAP-Rule" id="MF_01382"/>
    </source>
</evidence>
<evidence type="ECO:0000256" key="2">
    <source>
        <dbReference type="SAM" id="MobiDB-lite"/>
    </source>
</evidence>
<reference key="1">
    <citation type="submission" date="2008-10" db="EMBL/GenBank/DDBJ databases">
        <title>Complete sequence of Desulfovibrio vulgaris str. 'Miyazaki F'.</title>
        <authorList>
            <person name="Lucas S."/>
            <person name="Copeland A."/>
            <person name="Lapidus A."/>
            <person name="Glavina del Rio T."/>
            <person name="Dalin E."/>
            <person name="Tice H."/>
            <person name="Bruce D."/>
            <person name="Goodwin L."/>
            <person name="Pitluck S."/>
            <person name="Sims D."/>
            <person name="Brettin T."/>
            <person name="Detter J.C."/>
            <person name="Han C."/>
            <person name="Larimer F."/>
            <person name="Land M."/>
            <person name="Hauser L."/>
            <person name="Kyrpides N."/>
            <person name="Mikhailova N."/>
            <person name="Hazen T.C."/>
            <person name="Richardson P."/>
        </authorList>
    </citation>
    <scope>NUCLEOTIDE SEQUENCE [LARGE SCALE GENOMIC DNA]</scope>
    <source>
        <strain>DSM 19637 / Miyazaki F</strain>
    </source>
</reference>
<keyword id="KW-0067">ATP-binding</keyword>
<keyword id="KW-0997">Cell inner membrane</keyword>
<keyword id="KW-1003">Cell membrane</keyword>
<keyword id="KW-0963">Cytoplasm</keyword>
<keyword id="KW-0472">Membrane</keyword>
<keyword id="KW-0479">Metal-binding</keyword>
<keyword id="KW-0547">Nucleotide-binding</keyword>
<keyword id="KW-0653">Protein transport</keyword>
<keyword id="KW-1278">Translocase</keyword>
<keyword id="KW-0811">Translocation</keyword>
<keyword id="KW-0813">Transport</keyword>
<keyword id="KW-0862">Zinc</keyword>
<name>SECA_NITV9</name>
<dbReference type="EC" id="7.4.2.8" evidence="1"/>
<dbReference type="EMBL" id="CP001197">
    <property type="protein sequence ID" value="ACL09810.1"/>
    <property type="molecule type" value="Genomic_DNA"/>
</dbReference>
<dbReference type="SMR" id="B8DRH3"/>
<dbReference type="STRING" id="883.DvMF_2873"/>
<dbReference type="KEGG" id="dvm:DvMF_2873"/>
<dbReference type="eggNOG" id="COG0653">
    <property type="taxonomic scope" value="Bacteria"/>
</dbReference>
<dbReference type="HOGENOM" id="CLU_005314_3_0_7"/>
<dbReference type="OrthoDB" id="9805579at2"/>
<dbReference type="GO" id="GO:0031522">
    <property type="term" value="C:cell envelope Sec protein transport complex"/>
    <property type="evidence" value="ECO:0007669"/>
    <property type="project" value="TreeGrafter"/>
</dbReference>
<dbReference type="GO" id="GO:0005829">
    <property type="term" value="C:cytosol"/>
    <property type="evidence" value="ECO:0007669"/>
    <property type="project" value="TreeGrafter"/>
</dbReference>
<dbReference type="GO" id="GO:0005886">
    <property type="term" value="C:plasma membrane"/>
    <property type="evidence" value="ECO:0007669"/>
    <property type="project" value="UniProtKB-SubCell"/>
</dbReference>
<dbReference type="GO" id="GO:0005524">
    <property type="term" value="F:ATP binding"/>
    <property type="evidence" value="ECO:0007669"/>
    <property type="project" value="UniProtKB-UniRule"/>
</dbReference>
<dbReference type="GO" id="GO:0046872">
    <property type="term" value="F:metal ion binding"/>
    <property type="evidence" value="ECO:0007669"/>
    <property type="project" value="UniProtKB-KW"/>
</dbReference>
<dbReference type="GO" id="GO:0008564">
    <property type="term" value="F:protein-exporting ATPase activity"/>
    <property type="evidence" value="ECO:0007669"/>
    <property type="project" value="UniProtKB-EC"/>
</dbReference>
<dbReference type="GO" id="GO:0065002">
    <property type="term" value="P:intracellular protein transmembrane transport"/>
    <property type="evidence" value="ECO:0007669"/>
    <property type="project" value="UniProtKB-UniRule"/>
</dbReference>
<dbReference type="GO" id="GO:0017038">
    <property type="term" value="P:protein import"/>
    <property type="evidence" value="ECO:0007669"/>
    <property type="project" value="InterPro"/>
</dbReference>
<dbReference type="GO" id="GO:0006605">
    <property type="term" value="P:protein targeting"/>
    <property type="evidence" value="ECO:0007669"/>
    <property type="project" value="UniProtKB-UniRule"/>
</dbReference>
<dbReference type="GO" id="GO:0043952">
    <property type="term" value="P:protein transport by the Sec complex"/>
    <property type="evidence" value="ECO:0007669"/>
    <property type="project" value="TreeGrafter"/>
</dbReference>
<dbReference type="CDD" id="cd17928">
    <property type="entry name" value="DEXDc_SecA"/>
    <property type="match status" value="1"/>
</dbReference>
<dbReference type="CDD" id="cd18803">
    <property type="entry name" value="SF2_C_secA"/>
    <property type="match status" value="1"/>
</dbReference>
<dbReference type="FunFam" id="3.40.50.300:FF:000694">
    <property type="entry name" value="Preprotein translocase subunit SecA"/>
    <property type="match status" value="1"/>
</dbReference>
<dbReference type="FunFam" id="3.90.1440.10:FF:000001">
    <property type="entry name" value="Preprotein translocase subunit SecA"/>
    <property type="match status" value="1"/>
</dbReference>
<dbReference type="FunFam" id="3.40.50.300:FF:000334">
    <property type="entry name" value="Protein translocase subunit SecA"/>
    <property type="match status" value="1"/>
</dbReference>
<dbReference type="Gene3D" id="1.10.3060.10">
    <property type="entry name" value="Helical scaffold and wing domains of SecA"/>
    <property type="match status" value="1"/>
</dbReference>
<dbReference type="Gene3D" id="3.40.50.300">
    <property type="entry name" value="P-loop containing nucleotide triphosphate hydrolases"/>
    <property type="match status" value="3"/>
</dbReference>
<dbReference type="Gene3D" id="3.90.1440.10">
    <property type="entry name" value="SecA, preprotein cross-linking domain"/>
    <property type="match status" value="1"/>
</dbReference>
<dbReference type="HAMAP" id="MF_01382">
    <property type="entry name" value="SecA"/>
    <property type="match status" value="1"/>
</dbReference>
<dbReference type="InterPro" id="IPR014001">
    <property type="entry name" value="Helicase_ATP-bd"/>
</dbReference>
<dbReference type="InterPro" id="IPR001650">
    <property type="entry name" value="Helicase_C-like"/>
</dbReference>
<dbReference type="InterPro" id="IPR027417">
    <property type="entry name" value="P-loop_NTPase"/>
</dbReference>
<dbReference type="InterPro" id="IPR004027">
    <property type="entry name" value="SEC_C_motif"/>
</dbReference>
<dbReference type="InterPro" id="IPR000185">
    <property type="entry name" value="SecA"/>
</dbReference>
<dbReference type="InterPro" id="IPR020937">
    <property type="entry name" value="SecA_CS"/>
</dbReference>
<dbReference type="InterPro" id="IPR011115">
    <property type="entry name" value="SecA_DEAD"/>
</dbReference>
<dbReference type="InterPro" id="IPR014018">
    <property type="entry name" value="SecA_motor_DEAD"/>
</dbReference>
<dbReference type="InterPro" id="IPR011130">
    <property type="entry name" value="SecA_preprotein_X-link_dom"/>
</dbReference>
<dbReference type="InterPro" id="IPR044722">
    <property type="entry name" value="SecA_SF2_C"/>
</dbReference>
<dbReference type="InterPro" id="IPR011116">
    <property type="entry name" value="SecA_Wing/Scaffold"/>
</dbReference>
<dbReference type="InterPro" id="IPR036266">
    <property type="entry name" value="SecA_Wing/Scaffold_sf"/>
</dbReference>
<dbReference type="InterPro" id="IPR036670">
    <property type="entry name" value="SecA_X-link_sf"/>
</dbReference>
<dbReference type="NCBIfam" id="NF006630">
    <property type="entry name" value="PRK09200.1"/>
    <property type="match status" value="1"/>
</dbReference>
<dbReference type="NCBIfam" id="NF009538">
    <property type="entry name" value="PRK12904.1"/>
    <property type="match status" value="1"/>
</dbReference>
<dbReference type="NCBIfam" id="TIGR00963">
    <property type="entry name" value="secA"/>
    <property type="match status" value="1"/>
</dbReference>
<dbReference type="PANTHER" id="PTHR30612:SF0">
    <property type="entry name" value="CHLOROPLAST PROTEIN-TRANSPORTING ATPASE"/>
    <property type="match status" value="1"/>
</dbReference>
<dbReference type="PANTHER" id="PTHR30612">
    <property type="entry name" value="SECA INNER MEMBRANE COMPONENT OF SEC PROTEIN SECRETION SYSTEM"/>
    <property type="match status" value="1"/>
</dbReference>
<dbReference type="Pfam" id="PF21090">
    <property type="entry name" value="P-loop_SecA"/>
    <property type="match status" value="2"/>
</dbReference>
<dbReference type="Pfam" id="PF02810">
    <property type="entry name" value="SEC-C"/>
    <property type="match status" value="1"/>
</dbReference>
<dbReference type="Pfam" id="PF07517">
    <property type="entry name" value="SecA_DEAD"/>
    <property type="match status" value="1"/>
</dbReference>
<dbReference type="Pfam" id="PF01043">
    <property type="entry name" value="SecA_PP_bind"/>
    <property type="match status" value="1"/>
</dbReference>
<dbReference type="Pfam" id="PF07516">
    <property type="entry name" value="SecA_SW"/>
    <property type="match status" value="1"/>
</dbReference>
<dbReference type="PRINTS" id="PR00906">
    <property type="entry name" value="SECA"/>
</dbReference>
<dbReference type="SMART" id="SM00957">
    <property type="entry name" value="SecA_DEAD"/>
    <property type="match status" value="1"/>
</dbReference>
<dbReference type="SMART" id="SM00958">
    <property type="entry name" value="SecA_PP_bind"/>
    <property type="match status" value="1"/>
</dbReference>
<dbReference type="SUPFAM" id="SSF81886">
    <property type="entry name" value="Helical scaffold and wing domains of SecA"/>
    <property type="match status" value="1"/>
</dbReference>
<dbReference type="SUPFAM" id="SSF52540">
    <property type="entry name" value="P-loop containing nucleoside triphosphate hydrolases"/>
    <property type="match status" value="2"/>
</dbReference>
<dbReference type="SUPFAM" id="SSF81767">
    <property type="entry name" value="Pre-protein crosslinking domain of SecA"/>
    <property type="match status" value="1"/>
</dbReference>
<dbReference type="PROSITE" id="PS01312">
    <property type="entry name" value="SECA"/>
    <property type="match status" value="1"/>
</dbReference>
<dbReference type="PROSITE" id="PS51196">
    <property type="entry name" value="SECA_MOTOR_DEAD"/>
    <property type="match status" value="1"/>
</dbReference>
<gene>
    <name evidence="1" type="primary">secA</name>
    <name type="ordered locus">DvMF_2873</name>
</gene>
<sequence length="844" mass="95598">MFDTLFKSIFGSSNDRYIKRCRTRVEAINALEPQMQALADEDFPARIAEYREQAQNGRSLDDLLPEVFALTREAGKRALNMRHFDVQLVGGMVLHEGRIAEMKTGEGKTLVATLPVVLNAISGLGVHVVTVNDYLAKRDAAWMGRLYNFLGLSVGVIVHGLSDEERKEAYGADITYGTNNEFGFDYLRDNMKFYPHQLVQREHNFAIVDEVDSILIDEARTPLIISGPSEDSTGLYRRVDDIIPKLSPEAHFSVDEKARTATLTDEGVAKCEELLGIDNLFDPGNITFQHHVLQALKAHHVFRRDVDYIVTPEDQVVIVDEFTGRLMPGRRFSDGLHQALEAKEKVKVEAENQTLASITFQNYFRMYKKLAGMTGTADTEAVEFQQIYGLQVITIPTNKPMVRKDYPDSIYRTRREKFEAIVAAIGELHKSGQPVLVGTISIETSELLSAMLKKTGVPHNVLNAKHHEQEAEIVAQAGQRGKVTIATNMAGRGTDIVLGEGVRESGGLHILGTERHESRRIDNQLRGRSGRQGDPGSSRFYLSLEDDLMRLFGSDRISGLMQKLGMEEGEPIENRMVSRAIENAQKRVEGHNFEIRKTLLDYDNVMNQQREVIYTLRRETMMEADLEETAVEFMDDLFDEIYGDAEQGKGSEGDDAKAYAMARLRDVFNITRVLPLTDGQLPDRETARGAVLSILDELKRDTGEVYRDILRFFLLEEVDRCWKEHLLNMDHLRDGIGLRGYGQRDPKQEYKREGFSLFQEMLFRVRENLFRALTRLRIQREEQAPPEELKQEFKHKEEPKSLNYSGAQKETPSAAPERRGEPKVGRNDPCPCGSGQKYKKCCGA</sequence>
<protein>
    <recommendedName>
        <fullName evidence="1">Protein translocase subunit SecA</fullName>
        <ecNumber evidence="1">7.4.2.8</ecNumber>
    </recommendedName>
</protein>
<accession>B8DRH3</accession>